<name>MAZF8_MYCTO</name>
<gene>
    <name type="primary">mazF8</name>
    <name type="ordered locus">MT2334.2</name>
</gene>
<evidence type="ECO:0000250" key="1">
    <source>
        <dbReference type="UniProtKB" id="P9WIH7"/>
    </source>
</evidence>
<evidence type="ECO:0000305" key="2"/>
<proteinExistence type="uncertain"/>
<keyword id="KW-0255">Endonuclease</keyword>
<keyword id="KW-0378">Hydrolase</keyword>
<keyword id="KW-0540">Nuclease</keyword>
<keyword id="KW-1185">Reference proteome</keyword>
<keyword id="KW-1277">Toxin-antitoxin system</keyword>
<accession>P9WIH6</accession>
<accession>L0T9C1</accession>
<accession>Q50689</accession>
<dbReference type="EC" id="3.1.-.-"/>
<dbReference type="EMBL" id="AE000516">
    <property type="status" value="NOT_ANNOTATED_CDS"/>
    <property type="molecule type" value="Genomic_DNA"/>
</dbReference>
<dbReference type="PIR" id="F70730">
    <property type="entry name" value="F70730"/>
</dbReference>
<dbReference type="RefSeq" id="WP_003903830.1">
    <property type="nucleotide sequence ID" value="NZ_KK341227.1"/>
</dbReference>
<dbReference type="Proteomes" id="UP000001020">
    <property type="component" value="Chromosome"/>
</dbReference>
<dbReference type="GO" id="GO:0004519">
    <property type="term" value="F:endonuclease activity"/>
    <property type="evidence" value="ECO:0007669"/>
    <property type="project" value="UniProtKB-KW"/>
</dbReference>
<comment type="function">
    <text evidence="1 2">Putative toxic component of a type II toxin-antitoxin (TA) system. Acts as an endoribonuclease. Neutralized by coexpression with cognate antitoxin MazE8.</text>
</comment>
<comment type="subunit">
    <text evidence="1">Forms a complex with cognate antitoxin MazE8.</text>
</comment>
<comment type="caution">
    <text evidence="2">Could be the product of a pseudogene.</text>
</comment>
<reference key="1">
    <citation type="journal article" date="2002" name="J. Bacteriol.">
        <title>Whole-genome comparison of Mycobacterium tuberculosis clinical and laboratory strains.</title>
        <authorList>
            <person name="Fleischmann R.D."/>
            <person name="Alland D."/>
            <person name="Eisen J.A."/>
            <person name="Carpenter L."/>
            <person name="White O."/>
            <person name="Peterson J.D."/>
            <person name="DeBoy R.T."/>
            <person name="Dodson R.J."/>
            <person name="Gwinn M.L."/>
            <person name="Haft D.H."/>
            <person name="Hickey E.K."/>
            <person name="Kolonay J.F."/>
            <person name="Nelson W.C."/>
            <person name="Umayam L.A."/>
            <person name="Ermolaeva M.D."/>
            <person name="Salzberg S.L."/>
            <person name="Delcher A."/>
            <person name="Utterback T.R."/>
            <person name="Weidman J.F."/>
            <person name="Khouri H.M."/>
            <person name="Gill J."/>
            <person name="Mikula A."/>
            <person name="Bishai W."/>
            <person name="Jacobs W.R. Jr."/>
            <person name="Venter J.C."/>
            <person name="Fraser C.M."/>
        </authorList>
    </citation>
    <scope>NUCLEOTIDE SEQUENCE [LARGE SCALE GENOMIC DNA]</scope>
    <source>
        <strain>CDC 1551 / Oshkosh</strain>
    </source>
</reference>
<sequence length="105" mass="11046">MSIARSAQPIGWISCPPKGGSSCCRCGGGYTHIFCVSAWTGLVVDLQAEQVRSVVTERLRRRIGRGAPILAGTLAPGVGLAAQNREFRQFTGRSAPPSATIAFGE</sequence>
<organism>
    <name type="scientific">Mycobacterium tuberculosis (strain CDC 1551 / Oshkosh)</name>
    <dbReference type="NCBI Taxonomy" id="83331"/>
    <lineage>
        <taxon>Bacteria</taxon>
        <taxon>Bacillati</taxon>
        <taxon>Actinomycetota</taxon>
        <taxon>Actinomycetes</taxon>
        <taxon>Mycobacteriales</taxon>
        <taxon>Mycobacteriaceae</taxon>
        <taxon>Mycobacterium</taxon>
        <taxon>Mycobacterium tuberculosis complex</taxon>
    </lineage>
</organism>
<protein>
    <recommendedName>
        <fullName>Putative toxin MazF8</fullName>
        <ecNumber>3.1.-.-</ecNumber>
    </recommendedName>
</protein>
<feature type="chain" id="PRO_0000428005" description="Putative toxin MazF8">
    <location>
        <begin position="1"/>
        <end position="105"/>
    </location>
</feature>